<feature type="chain" id="PRO_0000301004" description="Peptide deformylase">
    <location>
        <begin position="1"/>
        <end position="184"/>
    </location>
</feature>
<feature type="active site" evidence="1">
    <location>
        <position position="141"/>
    </location>
</feature>
<feature type="binding site" evidence="1">
    <location>
        <position position="98"/>
    </location>
    <ligand>
        <name>Fe cation</name>
        <dbReference type="ChEBI" id="CHEBI:24875"/>
    </ligand>
</feature>
<feature type="binding site" evidence="1">
    <location>
        <position position="140"/>
    </location>
    <ligand>
        <name>Fe cation</name>
        <dbReference type="ChEBI" id="CHEBI:24875"/>
    </ligand>
</feature>
<feature type="binding site" evidence="1">
    <location>
        <position position="144"/>
    </location>
    <ligand>
        <name>Fe cation</name>
        <dbReference type="ChEBI" id="CHEBI:24875"/>
    </ligand>
</feature>
<evidence type="ECO:0000255" key="1">
    <source>
        <dbReference type="HAMAP-Rule" id="MF_00163"/>
    </source>
</evidence>
<organism>
    <name type="scientific">Bacteroides fragilis (strain ATCC 25285 / DSM 2151 / CCUG 4856 / JCM 11019 / LMG 10263 / NCTC 9343 / Onslow / VPI 2553 / EN-2)</name>
    <dbReference type="NCBI Taxonomy" id="272559"/>
    <lineage>
        <taxon>Bacteria</taxon>
        <taxon>Pseudomonadati</taxon>
        <taxon>Bacteroidota</taxon>
        <taxon>Bacteroidia</taxon>
        <taxon>Bacteroidales</taxon>
        <taxon>Bacteroidaceae</taxon>
        <taxon>Bacteroides</taxon>
    </lineage>
</organism>
<accession>Q5LEQ9</accession>
<proteinExistence type="inferred from homology"/>
<keyword id="KW-0378">Hydrolase</keyword>
<keyword id="KW-0408">Iron</keyword>
<keyword id="KW-0479">Metal-binding</keyword>
<keyword id="KW-0648">Protein biosynthesis</keyword>
<protein>
    <recommendedName>
        <fullName evidence="1">Peptide deformylase</fullName>
        <shortName evidence="1">PDF</shortName>
        <ecNumber evidence="1">3.5.1.88</ecNumber>
    </recommendedName>
    <alternativeName>
        <fullName evidence="1">Polypeptide deformylase</fullName>
    </alternativeName>
</protein>
<gene>
    <name evidence="1" type="primary">def</name>
    <name type="ordered locus">BF1691</name>
</gene>
<dbReference type="EC" id="3.5.1.88" evidence="1"/>
<dbReference type="EMBL" id="CR626927">
    <property type="protein sequence ID" value="CAH07391.1"/>
    <property type="molecule type" value="Genomic_DNA"/>
</dbReference>
<dbReference type="RefSeq" id="WP_005786565.1">
    <property type="nucleotide sequence ID" value="NZ_UFTH01000001.1"/>
</dbReference>
<dbReference type="SMR" id="Q5LEQ9"/>
<dbReference type="PaxDb" id="272559-BF9343_1610"/>
<dbReference type="GeneID" id="60369871"/>
<dbReference type="KEGG" id="bfs:BF9343_1610"/>
<dbReference type="eggNOG" id="COG0242">
    <property type="taxonomic scope" value="Bacteria"/>
</dbReference>
<dbReference type="HOGENOM" id="CLU_061901_2_0_10"/>
<dbReference type="Proteomes" id="UP000006731">
    <property type="component" value="Chromosome"/>
</dbReference>
<dbReference type="GO" id="GO:0046872">
    <property type="term" value="F:metal ion binding"/>
    <property type="evidence" value="ECO:0007669"/>
    <property type="project" value="UniProtKB-KW"/>
</dbReference>
<dbReference type="GO" id="GO:0042586">
    <property type="term" value="F:peptide deformylase activity"/>
    <property type="evidence" value="ECO:0007669"/>
    <property type="project" value="UniProtKB-UniRule"/>
</dbReference>
<dbReference type="GO" id="GO:0043686">
    <property type="term" value="P:co-translational protein modification"/>
    <property type="evidence" value="ECO:0007669"/>
    <property type="project" value="TreeGrafter"/>
</dbReference>
<dbReference type="GO" id="GO:0006412">
    <property type="term" value="P:translation"/>
    <property type="evidence" value="ECO:0007669"/>
    <property type="project" value="UniProtKB-UniRule"/>
</dbReference>
<dbReference type="CDD" id="cd00487">
    <property type="entry name" value="Pep_deformylase"/>
    <property type="match status" value="1"/>
</dbReference>
<dbReference type="Gene3D" id="3.90.45.10">
    <property type="entry name" value="Peptide deformylase"/>
    <property type="match status" value="1"/>
</dbReference>
<dbReference type="HAMAP" id="MF_00163">
    <property type="entry name" value="Pep_deformylase"/>
    <property type="match status" value="1"/>
</dbReference>
<dbReference type="InterPro" id="IPR023635">
    <property type="entry name" value="Peptide_deformylase"/>
</dbReference>
<dbReference type="InterPro" id="IPR036821">
    <property type="entry name" value="Peptide_deformylase_sf"/>
</dbReference>
<dbReference type="NCBIfam" id="TIGR00079">
    <property type="entry name" value="pept_deformyl"/>
    <property type="match status" value="1"/>
</dbReference>
<dbReference type="NCBIfam" id="NF001159">
    <property type="entry name" value="PRK00150.1-3"/>
    <property type="match status" value="1"/>
</dbReference>
<dbReference type="PANTHER" id="PTHR10458">
    <property type="entry name" value="PEPTIDE DEFORMYLASE"/>
    <property type="match status" value="1"/>
</dbReference>
<dbReference type="PANTHER" id="PTHR10458:SF22">
    <property type="entry name" value="PEPTIDE DEFORMYLASE"/>
    <property type="match status" value="1"/>
</dbReference>
<dbReference type="Pfam" id="PF01327">
    <property type="entry name" value="Pep_deformylase"/>
    <property type="match status" value="1"/>
</dbReference>
<dbReference type="PIRSF" id="PIRSF004749">
    <property type="entry name" value="Pep_def"/>
    <property type="match status" value="1"/>
</dbReference>
<dbReference type="PRINTS" id="PR01576">
    <property type="entry name" value="PDEFORMYLASE"/>
</dbReference>
<dbReference type="SUPFAM" id="SSF56420">
    <property type="entry name" value="Peptide deformylase"/>
    <property type="match status" value="1"/>
</dbReference>
<sequence>MILPIYVYGQPVLRQVAEDITVDYPNLKELIENMFETMDHADGVGLAAPQIGLPIRVVVINLDVLSEDYPEYKDFRKAYINAHIDVVEGEEVSMEEGCLSLPGIHESVKRGSKIHVRYMDENFVEHNEVVEGFLARVMQHEFDHLDGKMFIDHISPLRKQMIKGKLNTMLKGKARSSYKMKQVK</sequence>
<reference key="1">
    <citation type="journal article" date="2005" name="Science">
        <title>Extensive DNA inversions in the B. fragilis genome control variable gene expression.</title>
        <authorList>
            <person name="Cerdeno-Tarraga A.-M."/>
            <person name="Patrick S."/>
            <person name="Crossman L.C."/>
            <person name="Blakely G."/>
            <person name="Abratt V."/>
            <person name="Lennard N."/>
            <person name="Poxton I."/>
            <person name="Duerden B."/>
            <person name="Harris B."/>
            <person name="Quail M.A."/>
            <person name="Barron A."/>
            <person name="Clark L."/>
            <person name="Corton C."/>
            <person name="Doggett J."/>
            <person name="Holden M.T.G."/>
            <person name="Larke N."/>
            <person name="Line A."/>
            <person name="Lord A."/>
            <person name="Norbertczak H."/>
            <person name="Ormond D."/>
            <person name="Price C."/>
            <person name="Rabbinowitsch E."/>
            <person name="Woodward J."/>
            <person name="Barrell B.G."/>
            <person name="Parkhill J."/>
        </authorList>
    </citation>
    <scope>NUCLEOTIDE SEQUENCE [LARGE SCALE GENOMIC DNA]</scope>
    <source>
        <strain>ATCC 25285 / DSM 2151 / CCUG 4856 / JCM 11019 / LMG 10263 / NCTC 9343 / Onslow / VPI 2553 / EN-2</strain>
    </source>
</reference>
<comment type="function">
    <text evidence="1">Removes the formyl group from the N-terminal Met of newly synthesized proteins. Requires at least a dipeptide for an efficient rate of reaction. N-terminal L-methionine is a prerequisite for activity but the enzyme has broad specificity at other positions.</text>
</comment>
<comment type="catalytic activity">
    <reaction evidence="1">
        <text>N-terminal N-formyl-L-methionyl-[peptide] + H2O = N-terminal L-methionyl-[peptide] + formate</text>
        <dbReference type="Rhea" id="RHEA:24420"/>
        <dbReference type="Rhea" id="RHEA-COMP:10639"/>
        <dbReference type="Rhea" id="RHEA-COMP:10640"/>
        <dbReference type="ChEBI" id="CHEBI:15377"/>
        <dbReference type="ChEBI" id="CHEBI:15740"/>
        <dbReference type="ChEBI" id="CHEBI:49298"/>
        <dbReference type="ChEBI" id="CHEBI:64731"/>
        <dbReference type="EC" id="3.5.1.88"/>
    </reaction>
</comment>
<comment type="cofactor">
    <cofactor evidence="1">
        <name>Fe(2+)</name>
        <dbReference type="ChEBI" id="CHEBI:29033"/>
    </cofactor>
    <text evidence="1">Binds 1 Fe(2+) ion.</text>
</comment>
<comment type="similarity">
    <text evidence="1">Belongs to the polypeptide deformylase family.</text>
</comment>
<name>DEF_BACFN</name>